<accession>Q82DQ8</accession>
<comment type="function">
    <text evidence="1">Binds directly to 23S rRNA. The L1 stalk is quite mobile in the ribosome, and is involved in E site tRNA release.</text>
</comment>
<comment type="function">
    <text evidence="1">Protein L1 is also a translational repressor protein, it controls the translation of the L11 operon by binding to its mRNA.</text>
</comment>
<comment type="subunit">
    <text evidence="1">Part of the 50S ribosomal subunit.</text>
</comment>
<comment type="similarity">
    <text evidence="1">Belongs to the universal ribosomal protein uL1 family.</text>
</comment>
<protein>
    <recommendedName>
        <fullName evidence="1">Large ribosomal subunit protein uL1</fullName>
    </recommendedName>
    <alternativeName>
        <fullName evidence="2">50S ribosomal protein L1</fullName>
    </alternativeName>
</protein>
<evidence type="ECO:0000255" key="1">
    <source>
        <dbReference type="HAMAP-Rule" id="MF_01318"/>
    </source>
</evidence>
<evidence type="ECO:0000305" key="2"/>
<reference key="1">
    <citation type="journal article" date="2001" name="Proc. Natl. Acad. Sci. U.S.A.">
        <title>Genome sequence of an industrial microorganism Streptomyces avermitilis: deducing the ability of producing secondary metabolites.</title>
        <authorList>
            <person name="Omura S."/>
            <person name="Ikeda H."/>
            <person name="Ishikawa J."/>
            <person name="Hanamoto A."/>
            <person name="Takahashi C."/>
            <person name="Shinose M."/>
            <person name="Takahashi Y."/>
            <person name="Horikawa H."/>
            <person name="Nakazawa H."/>
            <person name="Osonoe T."/>
            <person name="Kikuchi H."/>
            <person name="Shiba T."/>
            <person name="Sakaki Y."/>
            <person name="Hattori M."/>
        </authorList>
    </citation>
    <scope>NUCLEOTIDE SEQUENCE [LARGE SCALE GENOMIC DNA]</scope>
    <source>
        <strain>ATCC 31267 / DSM 46492 / JCM 5070 / NBRC 14893 / NCIMB 12804 / NRRL 8165 / MA-4680</strain>
    </source>
</reference>
<reference key="2">
    <citation type="journal article" date="2003" name="Nat. Biotechnol.">
        <title>Complete genome sequence and comparative analysis of the industrial microorganism Streptomyces avermitilis.</title>
        <authorList>
            <person name="Ikeda H."/>
            <person name="Ishikawa J."/>
            <person name="Hanamoto A."/>
            <person name="Shinose M."/>
            <person name="Kikuchi H."/>
            <person name="Shiba T."/>
            <person name="Sakaki Y."/>
            <person name="Hattori M."/>
            <person name="Omura S."/>
        </authorList>
    </citation>
    <scope>NUCLEOTIDE SEQUENCE [LARGE SCALE GENOMIC DNA]</scope>
    <source>
        <strain>ATCC 31267 / DSM 46492 / JCM 5070 / NBRC 14893 / NCIMB 12804 / NRRL 8165 / MA-4680</strain>
    </source>
</reference>
<sequence>MSKRSKALRAADAKIDREKLYAPLEAVRLAKETSTSKFDGTVEVAFRLGVDPRKADQMVRGTVNLPHGTGKTARVLVFATGDRAEAARAAGADIVGSDELIDEVSKGRLDFDAVVATPDLMGKVGRLGRVLGPRGLMPNPKTGTVTPDVVKAVNEIKGGKIEFRVDKHSNLHFIIGKTSFDDTQLVENYGAALDEILRLKPSAAKGRYIKKAAISTTIGPGIPIDSNRTRNLLTEEDPAAV</sequence>
<feature type="chain" id="PRO_0000125744" description="Large ribosomal subunit protein uL1">
    <location>
        <begin position="1"/>
        <end position="241"/>
    </location>
</feature>
<proteinExistence type="inferred from homology"/>
<dbReference type="EMBL" id="BA000030">
    <property type="protein sequence ID" value="BAC72623.1"/>
    <property type="molecule type" value="Genomic_DNA"/>
</dbReference>
<dbReference type="RefSeq" id="WP_010986330.1">
    <property type="nucleotide sequence ID" value="NZ_JZJK01000077.1"/>
</dbReference>
<dbReference type="SMR" id="Q82DQ8"/>
<dbReference type="GeneID" id="41541995"/>
<dbReference type="KEGG" id="sma:SAVERM_4911"/>
<dbReference type="eggNOG" id="COG0081">
    <property type="taxonomic scope" value="Bacteria"/>
</dbReference>
<dbReference type="HOGENOM" id="CLU_062853_0_0_11"/>
<dbReference type="OrthoDB" id="9803740at2"/>
<dbReference type="Proteomes" id="UP000000428">
    <property type="component" value="Chromosome"/>
</dbReference>
<dbReference type="GO" id="GO:0015934">
    <property type="term" value="C:large ribosomal subunit"/>
    <property type="evidence" value="ECO:0007669"/>
    <property type="project" value="InterPro"/>
</dbReference>
<dbReference type="GO" id="GO:0019843">
    <property type="term" value="F:rRNA binding"/>
    <property type="evidence" value="ECO:0007669"/>
    <property type="project" value="UniProtKB-UniRule"/>
</dbReference>
<dbReference type="GO" id="GO:0003735">
    <property type="term" value="F:structural constituent of ribosome"/>
    <property type="evidence" value="ECO:0007669"/>
    <property type="project" value="InterPro"/>
</dbReference>
<dbReference type="GO" id="GO:0000049">
    <property type="term" value="F:tRNA binding"/>
    <property type="evidence" value="ECO:0007669"/>
    <property type="project" value="UniProtKB-KW"/>
</dbReference>
<dbReference type="GO" id="GO:0006417">
    <property type="term" value="P:regulation of translation"/>
    <property type="evidence" value="ECO:0007669"/>
    <property type="project" value="UniProtKB-KW"/>
</dbReference>
<dbReference type="GO" id="GO:0006412">
    <property type="term" value="P:translation"/>
    <property type="evidence" value="ECO:0007669"/>
    <property type="project" value="UniProtKB-UniRule"/>
</dbReference>
<dbReference type="CDD" id="cd00403">
    <property type="entry name" value="Ribosomal_L1"/>
    <property type="match status" value="1"/>
</dbReference>
<dbReference type="FunFam" id="3.40.50.790:FF:000001">
    <property type="entry name" value="50S ribosomal protein L1"/>
    <property type="match status" value="1"/>
</dbReference>
<dbReference type="Gene3D" id="3.30.190.20">
    <property type="match status" value="1"/>
</dbReference>
<dbReference type="Gene3D" id="3.40.50.790">
    <property type="match status" value="1"/>
</dbReference>
<dbReference type="HAMAP" id="MF_01318_B">
    <property type="entry name" value="Ribosomal_uL1_B"/>
    <property type="match status" value="1"/>
</dbReference>
<dbReference type="InterPro" id="IPR005878">
    <property type="entry name" value="Ribosom_uL1_bac-type"/>
</dbReference>
<dbReference type="InterPro" id="IPR002143">
    <property type="entry name" value="Ribosomal_uL1"/>
</dbReference>
<dbReference type="InterPro" id="IPR023674">
    <property type="entry name" value="Ribosomal_uL1-like"/>
</dbReference>
<dbReference type="InterPro" id="IPR028364">
    <property type="entry name" value="Ribosomal_uL1/biogenesis"/>
</dbReference>
<dbReference type="InterPro" id="IPR016095">
    <property type="entry name" value="Ribosomal_uL1_3-a/b-sand"/>
</dbReference>
<dbReference type="InterPro" id="IPR023673">
    <property type="entry name" value="Ribosomal_uL1_CS"/>
</dbReference>
<dbReference type="NCBIfam" id="TIGR01169">
    <property type="entry name" value="rplA_bact"/>
    <property type="match status" value="1"/>
</dbReference>
<dbReference type="PANTHER" id="PTHR36427">
    <property type="entry name" value="54S RIBOSOMAL PROTEIN L1, MITOCHONDRIAL"/>
    <property type="match status" value="1"/>
</dbReference>
<dbReference type="PANTHER" id="PTHR36427:SF3">
    <property type="entry name" value="LARGE RIBOSOMAL SUBUNIT PROTEIN UL1M"/>
    <property type="match status" value="1"/>
</dbReference>
<dbReference type="Pfam" id="PF00687">
    <property type="entry name" value="Ribosomal_L1"/>
    <property type="match status" value="1"/>
</dbReference>
<dbReference type="PIRSF" id="PIRSF002155">
    <property type="entry name" value="Ribosomal_L1"/>
    <property type="match status" value="1"/>
</dbReference>
<dbReference type="SUPFAM" id="SSF56808">
    <property type="entry name" value="Ribosomal protein L1"/>
    <property type="match status" value="1"/>
</dbReference>
<dbReference type="PROSITE" id="PS01199">
    <property type="entry name" value="RIBOSOMAL_L1"/>
    <property type="match status" value="1"/>
</dbReference>
<keyword id="KW-1185">Reference proteome</keyword>
<keyword id="KW-0678">Repressor</keyword>
<keyword id="KW-0687">Ribonucleoprotein</keyword>
<keyword id="KW-0689">Ribosomal protein</keyword>
<keyword id="KW-0694">RNA-binding</keyword>
<keyword id="KW-0699">rRNA-binding</keyword>
<keyword id="KW-0810">Translation regulation</keyword>
<keyword id="KW-0820">tRNA-binding</keyword>
<name>RL1_STRAW</name>
<organism>
    <name type="scientific">Streptomyces avermitilis (strain ATCC 31267 / DSM 46492 / JCM 5070 / NBRC 14893 / NCIMB 12804 / NRRL 8165 / MA-4680)</name>
    <dbReference type="NCBI Taxonomy" id="227882"/>
    <lineage>
        <taxon>Bacteria</taxon>
        <taxon>Bacillati</taxon>
        <taxon>Actinomycetota</taxon>
        <taxon>Actinomycetes</taxon>
        <taxon>Kitasatosporales</taxon>
        <taxon>Streptomycetaceae</taxon>
        <taxon>Streptomyces</taxon>
    </lineage>
</organism>
<gene>
    <name evidence="1" type="primary">rplA</name>
    <name type="ordered locus">SAV_4911</name>
</gene>